<name>GATC_OCEIH</name>
<proteinExistence type="inferred from homology"/>
<reference key="1">
    <citation type="journal article" date="2002" name="Nucleic Acids Res.">
        <title>Genome sequence of Oceanobacillus iheyensis isolated from the Iheya Ridge and its unexpected adaptive capabilities to extreme environments.</title>
        <authorList>
            <person name="Takami H."/>
            <person name="Takaki Y."/>
            <person name="Uchiyama I."/>
        </authorList>
    </citation>
    <scope>NUCLEOTIDE SEQUENCE [LARGE SCALE GENOMIC DNA]</scope>
    <source>
        <strain>DSM 14371 / CIP 107618 / JCM 11309 / KCTC 3954 / HTE831</strain>
    </source>
</reference>
<gene>
    <name evidence="1" type="primary">gatC</name>
    <name type="ordered locus">OB0764</name>
</gene>
<evidence type="ECO:0000255" key="1">
    <source>
        <dbReference type="HAMAP-Rule" id="MF_00122"/>
    </source>
</evidence>
<protein>
    <recommendedName>
        <fullName evidence="1">Aspartyl/glutamyl-tRNA(Asn/Gln) amidotransferase subunit C</fullName>
        <shortName evidence="1">Asp/Glu-ADT subunit C</shortName>
        <ecNumber evidence="1">6.3.5.-</ecNumber>
    </recommendedName>
</protein>
<dbReference type="EC" id="6.3.5.-" evidence="1"/>
<dbReference type="EMBL" id="BA000028">
    <property type="protein sequence ID" value="BAC12720.1"/>
    <property type="molecule type" value="Genomic_DNA"/>
</dbReference>
<dbReference type="RefSeq" id="WP_011065172.1">
    <property type="nucleotide sequence ID" value="NC_004193.1"/>
</dbReference>
<dbReference type="SMR" id="Q8ES79"/>
<dbReference type="STRING" id="221109.gene:10732985"/>
<dbReference type="KEGG" id="oih:OB0764"/>
<dbReference type="eggNOG" id="COG0721">
    <property type="taxonomic scope" value="Bacteria"/>
</dbReference>
<dbReference type="HOGENOM" id="CLU_105899_6_1_9"/>
<dbReference type="OrthoDB" id="9813938at2"/>
<dbReference type="PhylomeDB" id="Q8ES79"/>
<dbReference type="Proteomes" id="UP000000822">
    <property type="component" value="Chromosome"/>
</dbReference>
<dbReference type="GO" id="GO:0050566">
    <property type="term" value="F:asparaginyl-tRNA synthase (glutamine-hydrolyzing) activity"/>
    <property type="evidence" value="ECO:0007669"/>
    <property type="project" value="RHEA"/>
</dbReference>
<dbReference type="GO" id="GO:0005524">
    <property type="term" value="F:ATP binding"/>
    <property type="evidence" value="ECO:0007669"/>
    <property type="project" value="UniProtKB-KW"/>
</dbReference>
<dbReference type="GO" id="GO:0050567">
    <property type="term" value="F:glutaminyl-tRNA synthase (glutamine-hydrolyzing) activity"/>
    <property type="evidence" value="ECO:0007669"/>
    <property type="project" value="UniProtKB-UniRule"/>
</dbReference>
<dbReference type="GO" id="GO:0070681">
    <property type="term" value="P:glutaminyl-tRNAGln biosynthesis via transamidation"/>
    <property type="evidence" value="ECO:0007669"/>
    <property type="project" value="TreeGrafter"/>
</dbReference>
<dbReference type="GO" id="GO:0006450">
    <property type="term" value="P:regulation of translational fidelity"/>
    <property type="evidence" value="ECO:0007669"/>
    <property type="project" value="InterPro"/>
</dbReference>
<dbReference type="GO" id="GO:0006412">
    <property type="term" value="P:translation"/>
    <property type="evidence" value="ECO:0007669"/>
    <property type="project" value="UniProtKB-UniRule"/>
</dbReference>
<dbReference type="Gene3D" id="1.10.20.60">
    <property type="entry name" value="Glu-tRNAGln amidotransferase C subunit, N-terminal domain"/>
    <property type="match status" value="1"/>
</dbReference>
<dbReference type="HAMAP" id="MF_00122">
    <property type="entry name" value="GatC"/>
    <property type="match status" value="1"/>
</dbReference>
<dbReference type="InterPro" id="IPR036113">
    <property type="entry name" value="Asp/Glu-ADT_sf_sub_c"/>
</dbReference>
<dbReference type="InterPro" id="IPR003837">
    <property type="entry name" value="GatC"/>
</dbReference>
<dbReference type="NCBIfam" id="TIGR00135">
    <property type="entry name" value="gatC"/>
    <property type="match status" value="1"/>
</dbReference>
<dbReference type="PANTHER" id="PTHR15004">
    <property type="entry name" value="GLUTAMYL-TRNA(GLN) AMIDOTRANSFERASE SUBUNIT C, MITOCHONDRIAL"/>
    <property type="match status" value="1"/>
</dbReference>
<dbReference type="PANTHER" id="PTHR15004:SF0">
    <property type="entry name" value="GLUTAMYL-TRNA(GLN) AMIDOTRANSFERASE SUBUNIT C, MITOCHONDRIAL"/>
    <property type="match status" value="1"/>
</dbReference>
<dbReference type="Pfam" id="PF02686">
    <property type="entry name" value="GatC"/>
    <property type="match status" value="1"/>
</dbReference>
<dbReference type="SUPFAM" id="SSF141000">
    <property type="entry name" value="Glu-tRNAGln amidotransferase C subunit"/>
    <property type="match status" value="1"/>
</dbReference>
<comment type="function">
    <text evidence="1">Allows the formation of correctly charged Asn-tRNA(Asn) or Gln-tRNA(Gln) through the transamidation of misacylated Asp-tRNA(Asn) or Glu-tRNA(Gln) in organisms which lack either or both of asparaginyl-tRNA or glutaminyl-tRNA synthetases. The reaction takes place in the presence of glutamine and ATP through an activated phospho-Asp-tRNA(Asn) or phospho-Glu-tRNA(Gln).</text>
</comment>
<comment type="catalytic activity">
    <reaction evidence="1">
        <text>L-glutamyl-tRNA(Gln) + L-glutamine + ATP + H2O = L-glutaminyl-tRNA(Gln) + L-glutamate + ADP + phosphate + H(+)</text>
        <dbReference type="Rhea" id="RHEA:17521"/>
        <dbReference type="Rhea" id="RHEA-COMP:9681"/>
        <dbReference type="Rhea" id="RHEA-COMP:9684"/>
        <dbReference type="ChEBI" id="CHEBI:15377"/>
        <dbReference type="ChEBI" id="CHEBI:15378"/>
        <dbReference type="ChEBI" id="CHEBI:29985"/>
        <dbReference type="ChEBI" id="CHEBI:30616"/>
        <dbReference type="ChEBI" id="CHEBI:43474"/>
        <dbReference type="ChEBI" id="CHEBI:58359"/>
        <dbReference type="ChEBI" id="CHEBI:78520"/>
        <dbReference type="ChEBI" id="CHEBI:78521"/>
        <dbReference type="ChEBI" id="CHEBI:456216"/>
    </reaction>
</comment>
<comment type="catalytic activity">
    <reaction evidence="1">
        <text>L-aspartyl-tRNA(Asn) + L-glutamine + ATP + H2O = L-asparaginyl-tRNA(Asn) + L-glutamate + ADP + phosphate + 2 H(+)</text>
        <dbReference type="Rhea" id="RHEA:14513"/>
        <dbReference type="Rhea" id="RHEA-COMP:9674"/>
        <dbReference type="Rhea" id="RHEA-COMP:9677"/>
        <dbReference type="ChEBI" id="CHEBI:15377"/>
        <dbReference type="ChEBI" id="CHEBI:15378"/>
        <dbReference type="ChEBI" id="CHEBI:29985"/>
        <dbReference type="ChEBI" id="CHEBI:30616"/>
        <dbReference type="ChEBI" id="CHEBI:43474"/>
        <dbReference type="ChEBI" id="CHEBI:58359"/>
        <dbReference type="ChEBI" id="CHEBI:78515"/>
        <dbReference type="ChEBI" id="CHEBI:78516"/>
        <dbReference type="ChEBI" id="CHEBI:456216"/>
    </reaction>
</comment>
<comment type="subunit">
    <text evidence="1">Heterotrimer of A, B and C subunits.</text>
</comment>
<comment type="similarity">
    <text evidence="1">Belongs to the GatC family.</text>
</comment>
<feature type="chain" id="PRO_0000105317" description="Aspartyl/glutamyl-tRNA(Asn/Gln) amidotransferase subunit C">
    <location>
        <begin position="1"/>
        <end position="96"/>
    </location>
</feature>
<sequence>MAEISKDQVKHVAHLARLELDDEAVEKMSDELSAIIDFAEQLNELDTDSVEPTTHVLNLKNVMRKDEPKKWISQEDALRNAPDHKDGQIRVPSILE</sequence>
<accession>Q8ES79</accession>
<keyword id="KW-0067">ATP-binding</keyword>
<keyword id="KW-0436">Ligase</keyword>
<keyword id="KW-0547">Nucleotide-binding</keyword>
<keyword id="KW-0648">Protein biosynthesis</keyword>
<keyword id="KW-1185">Reference proteome</keyword>
<organism>
    <name type="scientific">Oceanobacillus iheyensis (strain DSM 14371 / CIP 107618 / JCM 11309 / KCTC 3954 / HTE831)</name>
    <dbReference type="NCBI Taxonomy" id="221109"/>
    <lineage>
        <taxon>Bacteria</taxon>
        <taxon>Bacillati</taxon>
        <taxon>Bacillota</taxon>
        <taxon>Bacilli</taxon>
        <taxon>Bacillales</taxon>
        <taxon>Bacillaceae</taxon>
        <taxon>Oceanobacillus</taxon>
    </lineage>
</organism>